<sequence length="100" mass="10972">MPVRSLSASNSKNAIPLSALRRIWSGELFLKWFCNSTAVMSLGKLPTKTINLLPFLPFLPLPPRPLRVFLFFFTGSSPSFPAALLGLFPSGACSFFTSFS</sequence>
<organism>
    <name type="scientific">Saccharomyces cerevisiae (strain ATCC 204508 / S288c)</name>
    <name type="common">Baker's yeast</name>
    <dbReference type="NCBI Taxonomy" id="559292"/>
    <lineage>
        <taxon>Eukaryota</taxon>
        <taxon>Fungi</taxon>
        <taxon>Dikarya</taxon>
        <taxon>Ascomycota</taxon>
        <taxon>Saccharomycotina</taxon>
        <taxon>Saccharomycetes</taxon>
        <taxon>Saccharomycetales</taxon>
        <taxon>Saccharomycetaceae</taxon>
        <taxon>Saccharomyces</taxon>
    </lineage>
</organism>
<dbReference type="EMBL" id="X99000">
    <property type="protein sequence ID" value="CAA67477.1"/>
    <property type="molecule type" value="Genomic_DNA"/>
</dbReference>
<dbReference type="EMBL" id="Z74261">
    <property type="status" value="NOT_ANNOTATED_CDS"/>
    <property type="molecule type" value="Genomic_DNA"/>
</dbReference>
<dbReference type="TopDownProteomics" id="Q00590"/>
<dbReference type="GO" id="GO:0016020">
    <property type="term" value="C:membrane"/>
    <property type="evidence" value="ECO:0007669"/>
    <property type="project" value="UniProtKB-SubCell"/>
</dbReference>
<name>YD213_YEAST</name>
<evidence type="ECO:0000255" key="1"/>
<evidence type="ECO:0000305" key="2"/>
<evidence type="ECO:0000305" key="3">
    <source>
    </source>
</evidence>
<gene>
    <name type="ordered locus">YDL213W-A</name>
    <name type="ORF">D1019</name>
</gene>
<feature type="chain" id="PRO_0000299748" description="Putative uncharacterized protein YDL213W-A">
    <location>
        <begin position="1"/>
        <end position="100"/>
    </location>
</feature>
<feature type="transmembrane region" description="Helical" evidence="1">
    <location>
        <begin position="68"/>
        <end position="88"/>
    </location>
</feature>
<reference key="1">
    <citation type="journal article" date="1997" name="Yeast">
        <title>The nucleotide sequence of a 39 kb segment of yeast chromosome IV: 12 new open reading frames, nine known genes and one gene for Gly-tRNA.</title>
        <authorList>
            <person name="Bahr A."/>
            <person name="Moeller-Rieker S."/>
            <person name="Hankeln T."/>
            <person name="Kraemer C."/>
            <person name="Protin U."/>
            <person name="Schmidt E.R."/>
        </authorList>
    </citation>
    <scope>NUCLEOTIDE SEQUENCE [GENOMIC DNA]</scope>
    <source>
        <strain>ATCC 96604 / S288c / FY1679</strain>
    </source>
</reference>
<reference key="2">
    <citation type="journal article" date="1997" name="Nature">
        <title>The nucleotide sequence of Saccharomyces cerevisiae chromosome IV.</title>
        <authorList>
            <person name="Jacq C."/>
            <person name="Alt-Moerbe J."/>
            <person name="Andre B."/>
            <person name="Arnold W."/>
            <person name="Bahr A."/>
            <person name="Ballesta J.P.G."/>
            <person name="Bargues M."/>
            <person name="Baron L."/>
            <person name="Becker A."/>
            <person name="Biteau N."/>
            <person name="Bloecker H."/>
            <person name="Blugeon C."/>
            <person name="Boskovic J."/>
            <person name="Brandt P."/>
            <person name="Brueckner M."/>
            <person name="Buitrago M.J."/>
            <person name="Coster F."/>
            <person name="Delaveau T."/>
            <person name="del Rey F."/>
            <person name="Dujon B."/>
            <person name="Eide L.G."/>
            <person name="Garcia-Cantalejo J.M."/>
            <person name="Goffeau A."/>
            <person name="Gomez-Peris A."/>
            <person name="Granotier C."/>
            <person name="Hanemann V."/>
            <person name="Hankeln T."/>
            <person name="Hoheisel J.D."/>
            <person name="Jaeger W."/>
            <person name="Jimenez A."/>
            <person name="Jonniaux J.-L."/>
            <person name="Kraemer C."/>
            <person name="Kuester H."/>
            <person name="Laamanen P."/>
            <person name="Legros Y."/>
            <person name="Louis E.J."/>
            <person name="Moeller-Rieker S."/>
            <person name="Monnet A."/>
            <person name="Moro M."/>
            <person name="Mueller-Auer S."/>
            <person name="Nussbaumer B."/>
            <person name="Paricio N."/>
            <person name="Paulin L."/>
            <person name="Perea J."/>
            <person name="Perez-Alonso M."/>
            <person name="Perez-Ortin J.E."/>
            <person name="Pohl T.M."/>
            <person name="Prydz H."/>
            <person name="Purnelle B."/>
            <person name="Rasmussen S.W."/>
            <person name="Remacha M.A."/>
            <person name="Revuelta J.L."/>
            <person name="Rieger M."/>
            <person name="Salom D."/>
            <person name="Saluz H.P."/>
            <person name="Saiz J.E."/>
            <person name="Saren A.-M."/>
            <person name="Schaefer M."/>
            <person name="Scharfe M."/>
            <person name="Schmidt E.R."/>
            <person name="Schneider C."/>
            <person name="Scholler P."/>
            <person name="Schwarz S."/>
            <person name="Soler-Mira A."/>
            <person name="Urrestarazu L.A."/>
            <person name="Verhasselt P."/>
            <person name="Vissers S."/>
            <person name="Voet M."/>
            <person name="Volckaert G."/>
            <person name="Wagner G."/>
            <person name="Wambutt R."/>
            <person name="Wedler E."/>
            <person name="Wedler H."/>
            <person name="Woelfl S."/>
            <person name="Harris D.E."/>
            <person name="Bowman S."/>
            <person name="Brown D."/>
            <person name="Churcher C.M."/>
            <person name="Connor R."/>
            <person name="Dedman K."/>
            <person name="Gentles S."/>
            <person name="Hamlin N."/>
            <person name="Hunt S."/>
            <person name="Jones L."/>
            <person name="McDonald S."/>
            <person name="Murphy L.D."/>
            <person name="Niblett D."/>
            <person name="Odell C."/>
            <person name="Oliver K."/>
            <person name="Rajandream M.A."/>
            <person name="Richards C."/>
            <person name="Shore L."/>
            <person name="Walsh S.V."/>
            <person name="Barrell B.G."/>
            <person name="Dietrich F.S."/>
            <person name="Mulligan J.T."/>
            <person name="Allen E."/>
            <person name="Araujo R."/>
            <person name="Aviles E."/>
            <person name="Berno A."/>
            <person name="Carpenter J."/>
            <person name="Chen E."/>
            <person name="Cherry J.M."/>
            <person name="Chung E."/>
            <person name="Duncan M."/>
            <person name="Hunicke-Smith S."/>
            <person name="Hyman R.W."/>
            <person name="Komp C."/>
            <person name="Lashkari D."/>
            <person name="Lew H."/>
            <person name="Lin D."/>
            <person name="Mosedale D."/>
            <person name="Nakahara K."/>
            <person name="Namath A."/>
            <person name="Oefner P."/>
            <person name="Oh C."/>
            <person name="Petel F.X."/>
            <person name="Roberts D."/>
            <person name="Schramm S."/>
            <person name="Schroeder M."/>
            <person name="Shogren T."/>
            <person name="Shroff N."/>
            <person name="Winant A."/>
            <person name="Yelton M.A."/>
            <person name="Botstein D."/>
            <person name="Davis R.W."/>
            <person name="Johnston M."/>
            <person name="Andrews S."/>
            <person name="Brinkman R."/>
            <person name="Cooper J."/>
            <person name="Ding H."/>
            <person name="Du Z."/>
            <person name="Favello A."/>
            <person name="Fulton L."/>
            <person name="Gattung S."/>
            <person name="Greco T."/>
            <person name="Hallsworth K."/>
            <person name="Hawkins J."/>
            <person name="Hillier L.W."/>
            <person name="Jier M."/>
            <person name="Johnson D."/>
            <person name="Johnston L."/>
            <person name="Kirsten J."/>
            <person name="Kucaba T."/>
            <person name="Langston Y."/>
            <person name="Latreille P."/>
            <person name="Le T."/>
            <person name="Mardis E."/>
            <person name="Menezes S."/>
            <person name="Miller N."/>
            <person name="Nhan M."/>
            <person name="Pauley A."/>
            <person name="Peluso D."/>
            <person name="Rifkin L."/>
            <person name="Riles L."/>
            <person name="Taich A."/>
            <person name="Trevaskis E."/>
            <person name="Vignati D."/>
            <person name="Wilcox L."/>
            <person name="Wohldman P."/>
            <person name="Vaudin M."/>
            <person name="Wilson R."/>
            <person name="Waterston R."/>
            <person name="Albermann K."/>
            <person name="Hani J."/>
            <person name="Heumann K."/>
            <person name="Kleine K."/>
            <person name="Mewes H.-W."/>
            <person name="Zollner A."/>
            <person name="Zaccaria P."/>
        </authorList>
    </citation>
    <scope>NUCLEOTIDE SEQUENCE [LARGE SCALE GENOMIC DNA]</scope>
    <source>
        <strain>ATCC 204508 / S288c</strain>
    </source>
</reference>
<reference key="3">
    <citation type="journal article" date="2014" name="G3 (Bethesda)">
        <title>The reference genome sequence of Saccharomyces cerevisiae: Then and now.</title>
        <authorList>
            <person name="Engel S.R."/>
            <person name="Dietrich F.S."/>
            <person name="Fisk D.G."/>
            <person name="Binkley G."/>
            <person name="Balakrishnan R."/>
            <person name="Costanzo M.C."/>
            <person name="Dwight S.S."/>
            <person name="Hitz B.C."/>
            <person name="Karra K."/>
            <person name="Nash R.S."/>
            <person name="Weng S."/>
            <person name="Wong E.D."/>
            <person name="Lloyd P."/>
            <person name="Skrzypek M.S."/>
            <person name="Miyasato S.R."/>
            <person name="Simison M."/>
            <person name="Cherry J.M."/>
        </authorList>
    </citation>
    <scope>GENOME REANNOTATION</scope>
    <source>
        <strain>ATCC 204508 / S288c</strain>
    </source>
</reference>
<proteinExistence type="uncertain"/>
<keyword id="KW-0472">Membrane</keyword>
<keyword id="KW-0812">Transmembrane</keyword>
<keyword id="KW-1133">Transmembrane helix</keyword>
<comment type="subcellular location">
    <subcellularLocation>
        <location evidence="2">Membrane</location>
        <topology evidence="2">Single-pass membrane protein</topology>
    </subcellularLocation>
</comment>
<comment type="caution">
    <text evidence="3">Product of a dubious gene prediction unlikely to encode a functional protein. Because of that it is not part of the S.cerevisiae S288c complete/reference proteome set.</text>
</comment>
<accession>Q00590</accession>
<protein>
    <recommendedName>
        <fullName>Putative uncharacterized protein YDL213W-A</fullName>
    </recommendedName>
</protein>